<sequence length="315" mass="33423">MSQPTVYIDGDQGTTGLLIHERLRGRIDLQLVTLPDAERKDPVRRAEAINAADIAILCLPDAAAREAVGFIRNPAVRVIDASSAHRTQPDWVYGFPEMANGHAQTIAHARRVTNPGCYPTGAIALLRPLQQAGLLPRDYPVSIHAVSGYSGGGRAAVDAFESGDASQAKPLQVYGLALAHKHVPEIQLHAGLTNRPMFVPAYGAYRQGIVLTVPIELRLLPAGVTGEQLHACLAHHYADARHVDVTPLADTQAITHLDPQALNGTNDMRLGVFVNAEHGQVLLSAVFDNLGKGASGAAVQNLDLMLGAADVAKAA</sequence>
<protein>
    <recommendedName>
        <fullName evidence="1">N-acetyl-gamma-glutamyl-phosphate reductase</fullName>
        <shortName evidence="1">AGPR</shortName>
        <ecNumber evidence="1">1.2.1.38</ecNumber>
    </recommendedName>
    <alternativeName>
        <fullName evidence="1">N-acetyl-glutamate semialdehyde dehydrogenase</fullName>
        <shortName evidence="1">NAGSA dehydrogenase</shortName>
    </alternativeName>
</protein>
<organism>
    <name type="scientific">Burkholderia lata (strain ATCC 17760 / DSM 23089 / LMG 22485 / NCIMB 9086 / R18194 / 383)</name>
    <dbReference type="NCBI Taxonomy" id="482957"/>
    <lineage>
        <taxon>Bacteria</taxon>
        <taxon>Pseudomonadati</taxon>
        <taxon>Pseudomonadota</taxon>
        <taxon>Betaproteobacteria</taxon>
        <taxon>Burkholderiales</taxon>
        <taxon>Burkholderiaceae</taxon>
        <taxon>Burkholderia</taxon>
        <taxon>Burkholderia cepacia complex</taxon>
    </lineage>
</organism>
<proteinExistence type="inferred from homology"/>
<evidence type="ECO:0000255" key="1">
    <source>
        <dbReference type="HAMAP-Rule" id="MF_01110"/>
    </source>
</evidence>
<dbReference type="EC" id="1.2.1.38" evidence="1"/>
<dbReference type="EMBL" id="CP000152">
    <property type="protein sequence ID" value="ABB13281.1"/>
    <property type="molecule type" value="Genomic_DNA"/>
</dbReference>
<dbReference type="RefSeq" id="WP_011356758.1">
    <property type="nucleotide sequence ID" value="NC_007511.1"/>
</dbReference>
<dbReference type="SMR" id="Q38ZT5"/>
<dbReference type="GeneID" id="45099467"/>
<dbReference type="KEGG" id="bur:Bcep18194_B3171"/>
<dbReference type="PATRIC" id="fig|482957.22.peg.7006"/>
<dbReference type="HOGENOM" id="CLU_077118_0_0_4"/>
<dbReference type="UniPathway" id="UPA00068">
    <property type="reaction ID" value="UER00108"/>
</dbReference>
<dbReference type="Proteomes" id="UP000002705">
    <property type="component" value="Chromosome 2"/>
</dbReference>
<dbReference type="GO" id="GO:0005737">
    <property type="term" value="C:cytoplasm"/>
    <property type="evidence" value="ECO:0007669"/>
    <property type="project" value="UniProtKB-SubCell"/>
</dbReference>
<dbReference type="GO" id="GO:0003942">
    <property type="term" value="F:N-acetyl-gamma-glutamyl-phosphate reductase activity"/>
    <property type="evidence" value="ECO:0007669"/>
    <property type="project" value="UniProtKB-UniRule"/>
</dbReference>
<dbReference type="GO" id="GO:0051287">
    <property type="term" value="F:NAD binding"/>
    <property type="evidence" value="ECO:0007669"/>
    <property type="project" value="InterPro"/>
</dbReference>
<dbReference type="GO" id="GO:0006526">
    <property type="term" value="P:L-arginine biosynthetic process"/>
    <property type="evidence" value="ECO:0007669"/>
    <property type="project" value="UniProtKB-UniRule"/>
</dbReference>
<dbReference type="CDD" id="cd23935">
    <property type="entry name" value="AGPR_2_C"/>
    <property type="match status" value="1"/>
</dbReference>
<dbReference type="CDD" id="cd17896">
    <property type="entry name" value="AGPR_2_N"/>
    <property type="match status" value="1"/>
</dbReference>
<dbReference type="Gene3D" id="3.30.360.10">
    <property type="entry name" value="Dihydrodipicolinate Reductase, domain 2"/>
    <property type="match status" value="1"/>
</dbReference>
<dbReference type="Gene3D" id="3.40.50.720">
    <property type="entry name" value="NAD(P)-binding Rossmann-like Domain"/>
    <property type="match status" value="1"/>
</dbReference>
<dbReference type="HAMAP" id="MF_01110">
    <property type="entry name" value="ArgC_type2"/>
    <property type="match status" value="1"/>
</dbReference>
<dbReference type="InterPro" id="IPR010136">
    <property type="entry name" value="AGPR_type-2"/>
</dbReference>
<dbReference type="InterPro" id="IPR036291">
    <property type="entry name" value="NAD(P)-bd_dom_sf"/>
</dbReference>
<dbReference type="InterPro" id="IPR050085">
    <property type="entry name" value="NAGSA_dehydrogenase"/>
</dbReference>
<dbReference type="InterPro" id="IPR000534">
    <property type="entry name" value="Semialdehyde_DH_NAD-bd"/>
</dbReference>
<dbReference type="NCBIfam" id="TIGR01851">
    <property type="entry name" value="argC_other"/>
    <property type="match status" value="1"/>
</dbReference>
<dbReference type="PANTHER" id="PTHR32338:SF10">
    <property type="entry name" value="N-ACETYL-GAMMA-GLUTAMYL-PHOSPHATE REDUCTASE, CHLOROPLASTIC-RELATED"/>
    <property type="match status" value="1"/>
</dbReference>
<dbReference type="PANTHER" id="PTHR32338">
    <property type="entry name" value="N-ACETYL-GAMMA-GLUTAMYL-PHOSPHATE REDUCTASE, CHLOROPLASTIC-RELATED-RELATED"/>
    <property type="match status" value="1"/>
</dbReference>
<dbReference type="Pfam" id="PF01118">
    <property type="entry name" value="Semialdhyde_dh"/>
    <property type="match status" value="1"/>
</dbReference>
<dbReference type="Pfam" id="PF22698">
    <property type="entry name" value="Semialdhyde_dhC_1"/>
    <property type="match status" value="1"/>
</dbReference>
<dbReference type="SMART" id="SM00859">
    <property type="entry name" value="Semialdhyde_dh"/>
    <property type="match status" value="1"/>
</dbReference>
<dbReference type="SUPFAM" id="SSF55347">
    <property type="entry name" value="Glyceraldehyde-3-phosphate dehydrogenase-like, C-terminal domain"/>
    <property type="match status" value="1"/>
</dbReference>
<dbReference type="SUPFAM" id="SSF51735">
    <property type="entry name" value="NAD(P)-binding Rossmann-fold domains"/>
    <property type="match status" value="1"/>
</dbReference>
<gene>
    <name evidence="1" type="primary">argC</name>
    <name type="ordered locus">Bcep18194_B3171</name>
</gene>
<name>ARGC_BURL3</name>
<reference key="1">
    <citation type="submission" date="2005-10" db="EMBL/GenBank/DDBJ databases">
        <title>Complete sequence of chromosome 2 of Burkholderia sp. 383.</title>
        <authorList>
            <consortium name="US DOE Joint Genome Institute"/>
            <person name="Copeland A."/>
            <person name="Lucas S."/>
            <person name="Lapidus A."/>
            <person name="Barry K."/>
            <person name="Detter J.C."/>
            <person name="Glavina T."/>
            <person name="Hammon N."/>
            <person name="Israni S."/>
            <person name="Pitluck S."/>
            <person name="Chain P."/>
            <person name="Malfatti S."/>
            <person name="Shin M."/>
            <person name="Vergez L."/>
            <person name="Schmutz J."/>
            <person name="Larimer F."/>
            <person name="Land M."/>
            <person name="Kyrpides N."/>
            <person name="Lykidis A."/>
            <person name="Richardson P."/>
        </authorList>
    </citation>
    <scope>NUCLEOTIDE SEQUENCE [LARGE SCALE GENOMIC DNA]</scope>
    <source>
        <strain>ATCC 17760 / DSM 23089 / LMG 22485 / NCIMB 9086 / R18194 / 383</strain>
    </source>
</reference>
<accession>Q38ZT5</accession>
<comment type="function">
    <text evidence="1">Catalyzes the NADPH-dependent reduction of N-acetyl-5-glutamyl phosphate to yield N-acetyl-L-glutamate 5-semialdehyde.</text>
</comment>
<comment type="catalytic activity">
    <reaction evidence="1">
        <text>N-acetyl-L-glutamate 5-semialdehyde + phosphate + NADP(+) = N-acetyl-L-glutamyl 5-phosphate + NADPH + H(+)</text>
        <dbReference type="Rhea" id="RHEA:21588"/>
        <dbReference type="ChEBI" id="CHEBI:15378"/>
        <dbReference type="ChEBI" id="CHEBI:29123"/>
        <dbReference type="ChEBI" id="CHEBI:43474"/>
        <dbReference type="ChEBI" id="CHEBI:57783"/>
        <dbReference type="ChEBI" id="CHEBI:57936"/>
        <dbReference type="ChEBI" id="CHEBI:58349"/>
        <dbReference type="EC" id="1.2.1.38"/>
    </reaction>
</comment>
<comment type="pathway">
    <text evidence="1">Amino-acid biosynthesis; L-arginine biosynthesis; N(2)-acetyl-L-ornithine from L-glutamate: step 3/4.</text>
</comment>
<comment type="subcellular location">
    <subcellularLocation>
        <location evidence="1">Cytoplasm</location>
    </subcellularLocation>
</comment>
<comment type="similarity">
    <text evidence="1">Belongs to the NAGSA dehydrogenase family. Type 2 subfamily.</text>
</comment>
<feature type="chain" id="PRO_1000137115" description="N-acetyl-gamma-glutamyl-phosphate reductase">
    <location>
        <begin position="1"/>
        <end position="315"/>
    </location>
</feature>
<feature type="active site" evidence="1">
    <location>
        <position position="117"/>
    </location>
</feature>
<keyword id="KW-0028">Amino-acid biosynthesis</keyword>
<keyword id="KW-0055">Arginine biosynthesis</keyword>
<keyword id="KW-0963">Cytoplasm</keyword>
<keyword id="KW-0521">NADP</keyword>
<keyword id="KW-0560">Oxidoreductase</keyword>